<comment type="function">
    <text evidence="1">Non-catalytic component of the RNA exosome complex which has 3'-&gt;5' exoribonuclease activity and participates in a multitude of cellular RNA processing and degradation events. In the nucleus, the RNA exosome complex is involved in proper maturation of stable RNA species such as rRNA, snRNA and snoRNA, in the elimination of RNA processing by-products and non-coding 'pervasive' transcripts, such as antisense RNA species and cryptic unstable transcripts (CUTs), and of mRNAs with processing defects, thereby limiting or excluding their export to the cytoplasm. In the cytoplasm, the RNA exosome complex is involved in general mRNA turnover and in RNA surveillance pathways, preventing translation of aberrant mRNAs. The catalytic inactive RNA exosome core complex of 9 subunits (Exo-9) is proposed to play a pivotal role in the binding and presentation of RNA for ribonucleolysis, and to serve as a scaffold for the association with catalytic subunits and accessory proteins or complexes. ski6 is part of the hexameric ring of RNase PH domain-containing subunits proposed to form a central channel which threads RNA substrates for degradation (By similarity).</text>
</comment>
<comment type="subunit">
    <text evidence="1">Component of the RNA exosome complex. Specifically part of the catalytically inactive RNA exosome core complex (Exo-9) which may associate with the catalytic subunits rrp6 and dis3 in cytoplasmic- and nuclear-specific RNA exosome complex forms. Exo-9 is formed by a hexameric base ring of RNase PH domain-containing subunits and a cap ring consisting of csl4, rrp4 and rrp40.</text>
</comment>
<comment type="subcellular location">
    <subcellularLocation>
        <location evidence="2">Cytoplasm</location>
    </subcellularLocation>
    <subcellularLocation>
        <location evidence="2">Nucleus</location>
        <location evidence="2">Nucleolus</location>
    </subcellularLocation>
</comment>
<comment type="similarity">
    <text evidence="3">Belongs to the RNase PH family.</text>
</comment>
<organism>
    <name type="scientific">Schizosaccharomyces pombe (strain 972 / ATCC 24843)</name>
    <name type="common">Fission yeast</name>
    <dbReference type="NCBI Taxonomy" id="284812"/>
    <lineage>
        <taxon>Eukaryota</taxon>
        <taxon>Fungi</taxon>
        <taxon>Dikarya</taxon>
        <taxon>Ascomycota</taxon>
        <taxon>Taphrinomycotina</taxon>
        <taxon>Schizosaccharomycetes</taxon>
        <taxon>Schizosaccharomycetales</taxon>
        <taxon>Schizosaccharomycetaceae</taxon>
        <taxon>Schizosaccharomyces</taxon>
    </lineage>
</organism>
<proteinExistence type="evidence at transcript level"/>
<evidence type="ECO:0000250" key="1">
    <source>
        <dbReference type="UniProtKB" id="P46948"/>
    </source>
</evidence>
<evidence type="ECO:0000269" key="2">
    <source>
    </source>
</evidence>
<evidence type="ECO:0000305" key="3"/>
<dbReference type="EMBL" id="D89141">
    <property type="protein sequence ID" value="BAA13803.1"/>
    <property type="molecule type" value="mRNA"/>
</dbReference>
<dbReference type="EMBL" id="CU329670">
    <property type="protein sequence ID" value="CAA15919.1"/>
    <property type="molecule type" value="Genomic_DNA"/>
</dbReference>
<dbReference type="PIR" id="T11646">
    <property type="entry name" value="T11646"/>
</dbReference>
<dbReference type="PIR" id="T11740">
    <property type="entry name" value="T11740"/>
</dbReference>
<dbReference type="RefSeq" id="NP_594082.1">
    <property type="nucleotide sequence ID" value="NM_001019503.2"/>
</dbReference>
<dbReference type="SMR" id="O42872"/>
<dbReference type="BioGRID" id="279871">
    <property type="interactions" value="12"/>
</dbReference>
<dbReference type="ComplexPortal" id="CPX-8914">
    <property type="entry name" value="Nucleolar exosome complex"/>
</dbReference>
<dbReference type="FunCoup" id="O42872">
    <property type="interactions" value="422"/>
</dbReference>
<dbReference type="IntAct" id="O42872">
    <property type="interactions" value="1"/>
</dbReference>
<dbReference type="STRING" id="284812.O42872"/>
<dbReference type="iPTMnet" id="O42872"/>
<dbReference type="PaxDb" id="4896-SPAC3G9.10c.1"/>
<dbReference type="EnsemblFungi" id="SPAC3G9.10c.1">
    <property type="protein sequence ID" value="SPAC3G9.10c.1:pep"/>
    <property type="gene ID" value="SPAC3G9.10c"/>
</dbReference>
<dbReference type="GeneID" id="2543451"/>
<dbReference type="KEGG" id="spo:2543451"/>
<dbReference type="PomBase" id="SPAC3G9.10c"/>
<dbReference type="VEuPathDB" id="FungiDB:SPAC3G9.10c"/>
<dbReference type="eggNOG" id="KOG1068">
    <property type="taxonomic scope" value="Eukaryota"/>
</dbReference>
<dbReference type="HOGENOM" id="CLU_063514_0_1_1"/>
<dbReference type="InParanoid" id="O42872"/>
<dbReference type="OMA" id="ECRINTH"/>
<dbReference type="PhylomeDB" id="O42872"/>
<dbReference type="Reactome" id="R-SPO-429958">
    <property type="pathway name" value="mRNA decay by 3' to 5' exoribonuclease"/>
</dbReference>
<dbReference type="Reactome" id="R-SPO-6791226">
    <property type="pathway name" value="Major pathway of rRNA processing in the nucleolus and cytosol"/>
</dbReference>
<dbReference type="PRO" id="PR:O42872"/>
<dbReference type="Proteomes" id="UP000002485">
    <property type="component" value="Chromosome I"/>
</dbReference>
<dbReference type="GO" id="GO:0000785">
    <property type="term" value="C:chromatin"/>
    <property type="evidence" value="ECO:0000314"/>
    <property type="project" value="PomBase"/>
</dbReference>
<dbReference type="GO" id="GO:0000177">
    <property type="term" value="C:cytoplasmic exosome (RNase complex)"/>
    <property type="evidence" value="ECO:0000318"/>
    <property type="project" value="GO_Central"/>
</dbReference>
<dbReference type="GO" id="GO:0005829">
    <property type="term" value="C:cytosol"/>
    <property type="evidence" value="ECO:0007005"/>
    <property type="project" value="PomBase"/>
</dbReference>
<dbReference type="GO" id="GO:0000178">
    <property type="term" value="C:exosome (RNase complex)"/>
    <property type="evidence" value="ECO:0000314"/>
    <property type="project" value="PomBase"/>
</dbReference>
<dbReference type="GO" id="GO:0000176">
    <property type="term" value="C:nuclear exosome (RNase complex)"/>
    <property type="evidence" value="ECO:0000269"/>
    <property type="project" value="PomBase"/>
</dbReference>
<dbReference type="GO" id="GO:0005730">
    <property type="term" value="C:nucleolus"/>
    <property type="evidence" value="ECO:0000318"/>
    <property type="project" value="GO_Central"/>
</dbReference>
<dbReference type="GO" id="GO:0005634">
    <property type="term" value="C:nucleus"/>
    <property type="evidence" value="ECO:0007005"/>
    <property type="project" value="PomBase"/>
</dbReference>
<dbReference type="GO" id="GO:0003723">
    <property type="term" value="F:RNA binding"/>
    <property type="evidence" value="ECO:0000318"/>
    <property type="project" value="GO_Central"/>
</dbReference>
<dbReference type="GO" id="GO:0000467">
    <property type="term" value="P:exonucleolytic trimming to generate mature 3'-end of 5.8S rRNA from tricistronic rRNA transcript (SSU-rRNA, 5.8S rRNA, LSU-rRNA)"/>
    <property type="evidence" value="ECO:0000266"/>
    <property type="project" value="PomBase"/>
</dbReference>
<dbReference type="GO" id="GO:0070651">
    <property type="term" value="P:nonfunctional rRNA decay"/>
    <property type="evidence" value="ECO:0000266"/>
    <property type="project" value="PomBase"/>
</dbReference>
<dbReference type="GO" id="GO:0071028">
    <property type="term" value="P:nuclear mRNA surveillance"/>
    <property type="evidence" value="ECO:0000318"/>
    <property type="project" value="GO_Central"/>
</dbReference>
<dbReference type="GO" id="GO:0071031">
    <property type="term" value="P:nuclear mRNA surveillance of mRNA 3'-end processing"/>
    <property type="evidence" value="ECO:0000315"/>
    <property type="project" value="PomBase"/>
</dbReference>
<dbReference type="GO" id="GO:0071042">
    <property type="term" value="P:nuclear polyadenylation-dependent mRNA catabolic process"/>
    <property type="evidence" value="ECO:0000266"/>
    <property type="project" value="PomBase"/>
</dbReference>
<dbReference type="GO" id="GO:0071035">
    <property type="term" value="P:nuclear polyadenylation-dependent rRNA catabolic process"/>
    <property type="evidence" value="ECO:0000266"/>
    <property type="project" value="PomBase"/>
</dbReference>
<dbReference type="GO" id="GO:0071027">
    <property type="term" value="P:nuclear RNA surveillance"/>
    <property type="evidence" value="ECO:0000315"/>
    <property type="project" value="PomBase"/>
</dbReference>
<dbReference type="GO" id="GO:0070478">
    <property type="term" value="P:nuclear-transcribed mRNA catabolic process, 3'-5' exonucleolytic nonsense-mediated decay"/>
    <property type="evidence" value="ECO:0000266"/>
    <property type="project" value="PomBase"/>
</dbReference>
<dbReference type="GO" id="GO:0070481">
    <property type="term" value="P:nuclear-transcribed mRNA catabolic process, non-stop decay"/>
    <property type="evidence" value="ECO:0000266"/>
    <property type="project" value="PomBase"/>
</dbReference>
<dbReference type="GO" id="GO:0071051">
    <property type="term" value="P:poly(A)-dependent snoRNA 3'-end processing"/>
    <property type="evidence" value="ECO:0000318"/>
    <property type="project" value="GO_Central"/>
</dbReference>
<dbReference type="GO" id="GO:0016075">
    <property type="term" value="P:rRNA catabolic process"/>
    <property type="evidence" value="ECO:0000318"/>
    <property type="project" value="GO_Central"/>
</dbReference>
<dbReference type="GO" id="GO:0030847">
    <property type="term" value="P:termination of RNA polymerase II transcription, exosome-dependent"/>
    <property type="evidence" value="ECO:0000315"/>
    <property type="project" value="PomBase"/>
</dbReference>
<dbReference type="GO" id="GO:0071038">
    <property type="term" value="P:TRAMP-dependent tRNA surveillance pathway"/>
    <property type="evidence" value="ECO:0000266"/>
    <property type="project" value="PomBase"/>
</dbReference>
<dbReference type="GO" id="GO:0034475">
    <property type="term" value="P:U4 snRNA 3'-end processing"/>
    <property type="evidence" value="ECO:0000318"/>
    <property type="project" value="GO_Central"/>
</dbReference>
<dbReference type="CDD" id="cd11370">
    <property type="entry name" value="RNase_PH_RRP41"/>
    <property type="match status" value="1"/>
</dbReference>
<dbReference type="FunFam" id="3.30.230.70:FF:000004">
    <property type="entry name" value="Exosome complex component Rrp41"/>
    <property type="match status" value="1"/>
</dbReference>
<dbReference type="Gene3D" id="3.30.230.70">
    <property type="entry name" value="GHMP Kinase, N-terminal domain"/>
    <property type="match status" value="1"/>
</dbReference>
<dbReference type="InterPro" id="IPR001247">
    <property type="entry name" value="ExoRNase_PH_dom1"/>
</dbReference>
<dbReference type="InterPro" id="IPR015847">
    <property type="entry name" value="ExoRNase_PH_dom2"/>
</dbReference>
<dbReference type="InterPro" id="IPR036345">
    <property type="entry name" value="ExoRNase_PH_dom2_sf"/>
</dbReference>
<dbReference type="InterPro" id="IPR027408">
    <property type="entry name" value="PNPase/RNase_PH_dom_sf"/>
</dbReference>
<dbReference type="InterPro" id="IPR020568">
    <property type="entry name" value="Ribosomal_Su5_D2-typ_SF"/>
</dbReference>
<dbReference type="InterPro" id="IPR050080">
    <property type="entry name" value="RNase_PH"/>
</dbReference>
<dbReference type="PANTHER" id="PTHR11953">
    <property type="entry name" value="EXOSOME COMPLEX COMPONENT"/>
    <property type="match status" value="1"/>
</dbReference>
<dbReference type="PANTHER" id="PTHR11953:SF0">
    <property type="entry name" value="EXOSOME COMPLEX COMPONENT RRP41"/>
    <property type="match status" value="1"/>
</dbReference>
<dbReference type="Pfam" id="PF01138">
    <property type="entry name" value="RNase_PH"/>
    <property type="match status" value="1"/>
</dbReference>
<dbReference type="Pfam" id="PF03725">
    <property type="entry name" value="RNase_PH_C"/>
    <property type="match status" value="1"/>
</dbReference>
<dbReference type="SUPFAM" id="SSF55666">
    <property type="entry name" value="Ribonuclease PH domain 2-like"/>
    <property type="match status" value="1"/>
</dbReference>
<dbReference type="SUPFAM" id="SSF54211">
    <property type="entry name" value="Ribosomal protein S5 domain 2-like"/>
    <property type="match status" value="1"/>
</dbReference>
<gene>
    <name type="primary">ski6</name>
    <name type="synonym">rrp41</name>
    <name type="ORF">SPAC3G9.10c</name>
</gene>
<sequence length="242" mass="26869">MSHFEILSLEGLRNDGRRWDEMRNFQCRIGIEPSENGSAFIELGNTKVLCIVDGPSEPVIKSKARADRTFVNVEINIASFSTIDVKKRFKSDRRIQLQCLALQNTFEEIIQTELYPRSQISVYLHVLQDDGAVMASCINATTLALIDAGIPVKDFVCCSTAGIVESDMLLDLNSLEESALSWLTVAVLGNIKKVVYMQLETSMHLDYLESVMNMAIAGSEHIYNTMQSAVRQSAKPALASLS</sequence>
<accession>O42872</accession>
<accession>P78792</accession>
<feature type="chain" id="PRO_0000139961" description="Exosome complex component ski6">
    <location>
        <begin position="1"/>
        <end position="242"/>
    </location>
</feature>
<feature type="sequence conflict" description="In Ref. 1; BAA13803." evidence="3" ref="1">
    <original>I</original>
    <variation>F</variation>
    <location>
        <position position="29"/>
    </location>
</feature>
<reference key="1">
    <citation type="journal article" date="1997" name="DNA Res.">
        <title>Identification of open reading frames in Schizosaccharomyces pombe cDNAs.</title>
        <authorList>
            <person name="Yoshioka S."/>
            <person name="Kato K."/>
            <person name="Nakai K."/>
            <person name="Okayama H."/>
            <person name="Nojima H."/>
        </authorList>
    </citation>
    <scope>NUCLEOTIDE SEQUENCE [LARGE SCALE MRNA]</scope>
    <source>
        <strain>PR745</strain>
    </source>
</reference>
<reference key="2">
    <citation type="journal article" date="2002" name="Nature">
        <title>The genome sequence of Schizosaccharomyces pombe.</title>
        <authorList>
            <person name="Wood V."/>
            <person name="Gwilliam R."/>
            <person name="Rajandream M.A."/>
            <person name="Lyne M.H."/>
            <person name="Lyne R."/>
            <person name="Stewart A."/>
            <person name="Sgouros J.G."/>
            <person name="Peat N."/>
            <person name="Hayles J."/>
            <person name="Baker S.G."/>
            <person name="Basham D."/>
            <person name="Bowman S."/>
            <person name="Brooks K."/>
            <person name="Brown D."/>
            <person name="Brown S."/>
            <person name="Chillingworth T."/>
            <person name="Churcher C.M."/>
            <person name="Collins M."/>
            <person name="Connor R."/>
            <person name="Cronin A."/>
            <person name="Davis P."/>
            <person name="Feltwell T."/>
            <person name="Fraser A."/>
            <person name="Gentles S."/>
            <person name="Goble A."/>
            <person name="Hamlin N."/>
            <person name="Harris D.E."/>
            <person name="Hidalgo J."/>
            <person name="Hodgson G."/>
            <person name="Holroyd S."/>
            <person name="Hornsby T."/>
            <person name="Howarth S."/>
            <person name="Huckle E.J."/>
            <person name="Hunt S."/>
            <person name="Jagels K."/>
            <person name="James K.D."/>
            <person name="Jones L."/>
            <person name="Jones M."/>
            <person name="Leather S."/>
            <person name="McDonald S."/>
            <person name="McLean J."/>
            <person name="Mooney P."/>
            <person name="Moule S."/>
            <person name="Mungall K.L."/>
            <person name="Murphy L.D."/>
            <person name="Niblett D."/>
            <person name="Odell C."/>
            <person name="Oliver K."/>
            <person name="O'Neil S."/>
            <person name="Pearson D."/>
            <person name="Quail M.A."/>
            <person name="Rabbinowitsch E."/>
            <person name="Rutherford K.M."/>
            <person name="Rutter S."/>
            <person name="Saunders D."/>
            <person name="Seeger K."/>
            <person name="Sharp S."/>
            <person name="Skelton J."/>
            <person name="Simmonds M.N."/>
            <person name="Squares R."/>
            <person name="Squares S."/>
            <person name="Stevens K."/>
            <person name="Taylor K."/>
            <person name="Taylor R.G."/>
            <person name="Tivey A."/>
            <person name="Walsh S.V."/>
            <person name="Warren T."/>
            <person name="Whitehead S."/>
            <person name="Woodward J.R."/>
            <person name="Volckaert G."/>
            <person name="Aert R."/>
            <person name="Robben J."/>
            <person name="Grymonprez B."/>
            <person name="Weltjens I."/>
            <person name="Vanstreels E."/>
            <person name="Rieger M."/>
            <person name="Schaefer M."/>
            <person name="Mueller-Auer S."/>
            <person name="Gabel C."/>
            <person name="Fuchs M."/>
            <person name="Duesterhoeft A."/>
            <person name="Fritzc C."/>
            <person name="Holzer E."/>
            <person name="Moestl D."/>
            <person name="Hilbert H."/>
            <person name="Borzym K."/>
            <person name="Langer I."/>
            <person name="Beck A."/>
            <person name="Lehrach H."/>
            <person name="Reinhardt R."/>
            <person name="Pohl T.M."/>
            <person name="Eger P."/>
            <person name="Zimmermann W."/>
            <person name="Wedler H."/>
            <person name="Wambutt R."/>
            <person name="Purnelle B."/>
            <person name="Goffeau A."/>
            <person name="Cadieu E."/>
            <person name="Dreano S."/>
            <person name="Gloux S."/>
            <person name="Lelaure V."/>
            <person name="Mottier S."/>
            <person name="Galibert F."/>
            <person name="Aves S.J."/>
            <person name="Xiang Z."/>
            <person name="Hunt C."/>
            <person name="Moore K."/>
            <person name="Hurst S.M."/>
            <person name="Lucas M."/>
            <person name="Rochet M."/>
            <person name="Gaillardin C."/>
            <person name="Tallada V.A."/>
            <person name="Garzon A."/>
            <person name="Thode G."/>
            <person name="Daga R.R."/>
            <person name="Cruzado L."/>
            <person name="Jimenez J."/>
            <person name="Sanchez M."/>
            <person name="del Rey F."/>
            <person name="Benito J."/>
            <person name="Dominguez A."/>
            <person name="Revuelta J.L."/>
            <person name="Moreno S."/>
            <person name="Armstrong J."/>
            <person name="Forsburg S.L."/>
            <person name="Cerutti L."/>
            <person name="Lowe T."/>
            <person name="McCombie W.R."/>
            <person name="Paulsen I."/>
            <person name="Potashkin J."/>
            <person name="Shpakovski G.V."/>
            <person name="Ussery D."/>
            <person name="Barrell B.G."/>
            <person name="Nurse P."/>
        </authorList>
    </citation>
    <scope>NUCLEOTIDE SEQUENCE [LARGE SCALE GENOMIC DNA]</scope>
    <source>
        <strain>972 / ATCC 24843</strain>
    </source>
</reference>
<reference key="3">
    <citation type="journal article" date="2006" name="Nat. Biotechnol.">
        <title>ORFeome cloning and global analysis of protein localization in the fission yeast Schizosaccharomyces pombe.</title>
        <authorList>
            <person name="Matsuyama A."/>
            <person name="Arai R."/>
            <person name="Yashiroda Y."/>
            <person name="Shirai A."/>
            <person name="Kamata A."/>
            <person name="Sekido S."/>
            <person name="Kobayashi Y."/>
            <person name="Hashimoto A."/>
            <person name="Hamamoto M."/>
            <person name="Hiraoka Y."/>
            <person name="Horinouchi S."/>
            <person name="Yoshida M."/>
        </authorList>
    </citation>
    <scope>SUBCELLULAR LOCATION [LARGE SCALE ANALYSIS]</scope>
</reference>
<name>RRP41_SCHPO</name>
<keyword id="KW-0963">Cytoplasm</keyword>
<keyword id="KW-0271">Exosome</keyword>
<keyword id="KW-0539">Nucleus</keyword>
<keyword id="KW-1185">Reference proteome</keyword>
<keyword id="KW-0694">RNA-binding</keyword>
<keyword id="KW-0698">rRNA processing</keyword>
<protein>
    <recommendedName>
        <fullName>Exosome complex component ski6</fullName>
    </recommendedName>
    <alternativeName>
        <fullName>Ribosomal RNA-processing protein 41</fullName>
    </alternativeName>
</protein>